<sequence>MSYFGLETFNENQSEENLDEESVILTLVPFKEEEEPNTDYATQSNVSSSTLDHTPPARSLVRHAGIKHPTRTIPSTCPPPSLPPIRDVSRNTLREWCRYHNLSTDGKKVEVYLRLRRHSYSKQECYIPNTSREARMKQGPKKSKIVFRGIGPPSGCQRKKEESGVLEILTSPKESTFAAWARIAMRAAQSMSKNRCPLPSNVEAFLPQATGSRWCVVHGRQLPADKKGWVRLQFLAGQTWVPDTPQRMNFLFLLPACIIPEPGVEDNLLCPECVHSNKKILRNFKIRSRAKKNALPPNMPP</sequence>
<reference key="1">
    <citation type="journal article" date="2003" name="Development">
        <title>Incomplete reactivation of Oct4-related genes in mouse embryos cloned from somatic nuclei.</title>
        <authorList>
            <person name="Bortvin A."/>
            <person name="Eggan K."/>
            <person name="Skaletsky H."/>
            <person name="Akutsu H."/>
            <person name="Berry D.L."/>
            <person name="Yanagimachi R."/>
            <person name="Page D.C."/>
            <person name="Jaenisch R."/>
        </authorList>
    </citation>
    <scope>NUCLEOTIDE SEQUENCE [MRNA]</scope>
    <scope>TISSUE SPECIFICITY</scope>
    <scope>DEVELOPMENTAL STAGE</scope>
</reference>
<reference key="2">
    <citation type="journal article" date="2004" name="Zhonghua Yi Xue Yi Chuan Xue Za Zhi">
        <title>Molecular cloning and characterization analysis of HPESCRG1, a novel gene expressed specifically in human embryonic stem cell.</title>
        <authorList>
            <person name="Du J."/>
            <person name="Lin G."/>
            <person name="Nie Z.Y."/>
            <person name="Lu G.X."/>
        </authorList>
    </citation>
    <scope>NUCLEOTIDE SEQUENCE [MRNA]</scope>
</reference>
<reference key="3">
    <citation type="journal article" date="2005" name="Science">
        <title>The transcriptional landscape of the mammalian genome.</title>
        <authorList>
            <person name="Carninci P."/>
            <person name="Kasukawa T."/>
            <person name="Katayama S."/>
            <person name="Gough J."/>
            <person name="Frith M.C."/>
            <person name="Maeda N."/>
            <person name="Oyama R."/>
            <person name="Ravasi T."/>
            <person name="Lenhard B."/>
            <person name="Wells C."/>
            <person name="Kodzius R."/>
            <person name="Shimokawa K."/>
            <person name="Bajic V.B."/>
            <person name="Brenner S.E."/>
            <person name="Batalov S."/>
            <person name="Forrest A.R."/>
            <person name="Zavolan M."/>
            <person name="Davis M.J."/>
            <person name="Wilming L.G."/>
            <person name="Aidinis V."/>
            <person name="Allen J.E."/>
            <person name="Ambesi-Impiombato A."/>
            <person name="Apweiler R."/>
            <person name="Aturaliya R.N."/>
            <person name="Bailey T.L."/>
            <person name="Bansal M."/>
            <person name="Baxter L."/>
            <person name="Beisel K.W."/>
            <person name="Bersano T."/>
            <person name="Bono H."/>
            <person name="Chalk A.M."/>
            <person name="Chiu K.P."/>
            <person name="Choudhary V."/>
            <person name="Christoffels A."/>
            <person name="Clutterbuck D.R."/>
            <person name="Crowe M.L."/>
            <person name="Dalla E."/>
            <person name="Dalrymple B.P."/>
            <person name="de Bono B."/>
            <person name="Della Gatta G."/>
            <person name="di Bernardo D."/>
            <person name="Down T."/>
            <person name="Engstrom P."/>
            <person name="Fagiolini M."/>
            <person name="Faulkner G."/>
            <person name="Fletcher C.F."/>
            <person name="Fukushima T."/>
            <person name="Furuno M."/>
            <person name="Futaki S."/>
            <person name="Gariboldi M."/>
            <person name="Georgii-Hemming P."/>
            <person name="Gingeras T.R."/>
            <person name="Gojobori T."/>
            <person name="Green R.E."/>
            <person name="Gustincich S."/>
            <person name="Harbers M."/>
            <person name="Hayashi Y."/>
            <person name="Hensch T.K."/>
            <person name="Hirokawa N."/>
            <person name="Hill D."/>
            <person name="Huminiecki L."/>
            <person name="Iacono M."/>
            <person name="Ikeo K."/>
            <person name="Iwama A."/>
            <person name="Ishikawa T."/>
            <person name="Jakt M."/>
            <person name="Kanapin A."/>
            <person name="Katoh M."/>
            <person name="Kawasawa Y."/>
            <person name="Kelso J."/>
            <person name="Kitamura H."/>
            <person name="Kitano H."/>
            <person name="Kollias G."/>
            <person name="Krishnan S.P."/>
            <person name="Kruger A."/>
            <person name="Kummerfeld S.K."/>
            <person name="Kurochkin I.V."/>
            <person name="Lareau L.F."/>
            <person name="Lazarevic D."/>
            <person name="Lipovich L."/>
            <person name="Liu J."/>
            <person name="Liuni S."/>
            <person name="McWilliam S."/>
            <person name="Madan Babu M."/>
            <person name="Madera M."/>
            <person name="Marchionni L."/>
            <person name="Matsuda H."/>
            <person name="Matsuzawa S."/>
            <person name="Miki H."/>
            <person name="Mignone F."/>
            <person name="Miyake S."/>
            <person name="Morris K."/>
            <person name="Mottagui-Tabar S."/>
            <person name="Mulder N."/>
            <person name="Nakano N."/>
            <person name="Nakauchi H."/>
            <person name="Ng P."/>
            <person name="Nilsson R."/>
            <person name="Nishiguchi S."/>
            <person name="Nishikawa S."/>
            <person name="Nori F."/>
            <person name="Ohara O."/>
            <person name="Okazaki Y."/>
            <person name="Orlando V."/>
            <person name="Pang K.C."/>
            <person name="Pavan W.J."/>
            <person name="Pavesi G."/>
            <person name="Pesole G."/>
            <person name="Petrovsky N."/>
            <person name="Piazza S."/>
            <person name="Reed J."/>
            <person name="Reid J.F."/>
            <person name="Ring B.Z."/>
            <person name="Ringwald M."/>
            <person name="Rost B."/>
            <person name="Ruan Y."/>
            <person name="Salzberg S.L."/>
            <person name="Sandelin A."/>
            <person name="Schneider C."/>
            <person name="Schoenbach C."/>
            <person name="Sekiguchi K."/>
            <person name="Semple C.A."/>
            <person name="Seno S."/>
            <person name="Sessa L."/>
            <person name="Sheng Y."/>
            <person name="Shibata Y."/>
            <person name="Shimada H."/>
            <person name="Shimada K."/>
            <person name="Silva D."/>
            <person name="Sinclair B."/>
            <person name="Sperling S."/>
            <person name="Stupka E."/>
            <person name="Sugiura K."/>
            <person name="Sultana R."/>
            <person name="Takenaka Y."/>
            <person name="Taki K."/>
            <person name="Tammoja K."/>
            <person name="Tan S.L."/>
            <person name="Tang S."/>
            <person name="Taylor M.S."/>
            <person name="Tegner J."/>
            <person name="Teichmann S.A."/>
            <person name="Ueda H.R."/>
            <person name="van Nimwegen E."/>
            <person name="Verardo R."/>
            <person name="Wei C.L."/>
            <person name="Yagi K."/>
            <person name="Yamanishi H."/>
            <person name="Zabarovsky E."/>
            <person name="Zhu S."/>
            <person name="Zimmer A."/>
            <person name="Hide W."/>
            <person name="Bult C."/>
            <person name="Grimmond S.M."/>
            <person name="Teasdale R.D."/>
            <person name="Liu E.T."/>
            <person name="Brusic V."/>
            <person name="Quackenbush J."/>
            <person name="Wahlestedt C."/>
            <person name="Mattick J.S."/>
            <person name="Hume D.A."/>
            <person name="Kai C."/>
            <person name="Sasaki D."/>
            <person name="Tomaru Y."/>
            <person name="Fukuda S."/>
            <person name="Kanamori-Katayama M."/>
            <person name="Suzuki M."/>
            <person name="Aoki J."/>
            <person name="Arakawa T."/>
            <person name="Iida J."/>
            <person name="Imamura K."/>
            <person name="Itoh M."/>
            <person name="Kato T."/>
            <person name="Kawaji H."/>
            <person name="Kawagashira N."/>
            <person name="Kawashima T."/>
            <person name="Kojima M."/>
            <person name="Kondo S."/>
            <person name="Konno H."/>
            <person name="Nakano K."/>
            <person name="Ninomiya N."/>
            <person name="Nishio T."/>
            <person name="Okada M."/>
            <person name="Plessy C."/>
            <person name="Shibata K."/>
            <person name="Shiraki T."/>
            <person name="Suzuki S."/>
            <person name="Tagami M."/>
            <person name="Waki K."/>
            <person name="Watahiki A."/>
            <person name="Okamura-Oho Y."/>
            <person name="Suzuki H."/>
            <person name="Kawai J."/>
            <person name="Hayashizaki Y."/>
        </authorList>
    </citation>
    <scope>NUCLEOTIDE SEQUENCE [LARGE SCALE MRNA]</scope>
    <source>
        <strain>C57BL/6J</strain>
        <tissue>Blastocyst</tissue>
        <tissue>Egg</tissue>
        <tissue>Embryonic stem cell</tissue>
    </source>
</reference>
<reference key="4">
    <citation type="journal article" date="2011" name="Mol. Cell. Biol.">
        <title>Essential roles of ECAT15-2/Dppa2 in functional lung development.</title>
        <authorList>
            <person name="Nakamura T."/>
            <person name="Nakagawa M."/>
            <person name="Ichisaka T."/>
            <person name="Shiota A."/>
            <person name="Yamanaka S."/>
        </authorList>
    </citation>
    <scope>FUNCTION</scope>
    <scope>INTERACTION WITH DPPA4</scope>
    <scope>SUBCELLULAR LOCATION</scope>
    <scope>DEVELOPMENTAL STAGE</scope>
    <scope>DISRUPTION PHENOTYPE</scope>
</reference>
<protein>
    <recommendedName>
        <fullName>Developmental pluripotency-associated protein 2</fullName>
    </recommendedName>
    <alternativeName>
        <fullName>Embryonic stem cell-associated transcript 15-2 protein</fullName>
        <shortName>ECAT15-2</shortName>
    </alternativeName>
    <alternativeName>
        <fullName>Pluripotent embryonic stem cell-related gene 1 protein</fullName>
    </alternativeName>
</protein>
<dbReference type="EMBL" id="AF490346">
    <property type="protein sequence ID" value="AAO84504.1"/>
    <property type="molecule type" value="mRNA"/>
</dbReference>
<dbReference type="EMBL" id="AY561246">
    <property type="protein sequence ID" value="AAS68013.1"/>
    <property type="molecule type" value="mRNA"/>
</dbReference>
<dbReference type="EMBL" id="AK010743">
    <property type="protein sequence ID" value="BAB27153.1"/>
    <property type="molecule type" value="mRNA"/>
</dbReference>
<dbReference type="EMBL" id="AK145760">
    <property type="protein sequence ID" value="BAE26632.1"/>
    <property type="molecule type" value="mRNA"/>
</dbReference>
<dbReference type="EMBL" id="AK145645">
    <property type="protein sequence ID" value="BAE26562.1"/>
    <property type="molecule type" value="mRNA"/>
</dbReference>
<dbReference type="EMBL" id="AK163375">
    <property type="protein sequence ID" value="BAE37324.1"/>
    <property type="molecule type" value="mRNA"/>
</dbReference>
<dbReference type="EMBL" id="AK167211">
    <property type="protein sequence ID" value="BAE39338.1"/>
    <property type="molecule type" value="mRNA"/>
</dbReference>
<dbReference type="CCDS" id="CCDS37350.1"/>
<dbReference type="RefSeq" id="NP_082891.1">
    <property type="nucleotide sequence ID" value="NM_028615.1"/>
</dbReference>
<dbReference type="SMR" id="Q9CWH0"/>
<dbReference type="FunCoup" id="Q9CWH0">
    <property type="interactions" value="546"/>
</dbReference>
<dbReference type="STRING" id="10090.ENSMUSP00000156143"/>
<dbReference type="iPTMnet" id="Q9CWH0"/>
<dbReference type="PhosphoSitePlus" id="Q9CWH0"/>
<dbReference type="PaxDb" id="10090-ENSMUSP00000110183"/>
<dbReference type="ProteomicsDB" id="277492"/>
<dbReference type="Antibodypedia" id="32413">
    <property type="antibodies" value="307 antibodies from 31 providers"/>
</dbReference>
<dbReference type="DNASU" id="73703"/>
<dbReference type="Ensembl" id="ENSMUST00000097175.5">
    <property type="protein sequence ID" value="ENSMUSP00000110183.4"/>
    <property type="gene ID" value="ENSMUSG00000072419.6"/>
</dbReference>
<dbReference type="Ensembl" id="ENSMUST00000232448.2">
    <property type="protein sequence ID" value="ENSMUSP00000156143.2"/>
    <property type="gene ID" value="ENSMUSG00000072419.6"/>
</dbReference>
<dbReference type="GeneID" id="73703"/>
<dbReference type="KEGG" id="mmu:73703"/>
<dbReference type="UCSC" id="uc007zjn.1">
    <property type="organism name" value="mouse"/>
</dbReference>
<dbReference type="AGR" id="MGI:2157523"/>
<dbReference type="CTD" id="151871"/>
<dbReference type="MGI" id="MGI:2157523">
    <property type="gene designation" value="Dppa2"/>
</dbReference>
<dbReference type="VEuPathDB" id="HostDB:ENSMUSG00000072419"/>
<dbReference type="eggNOG" id="ENOG502RVK6">
    <property type="taxonomic scope" value="Eukaryota"/>
</dbReference>
<dbReference type="GeneTree" id="ENSGT00390000004871"/>
<dbReference type="HOGENOM" id="CLU_080062_1_0_1"/>
<dbReference type="InParanoid" id="Q9CWH0"/>
<dbReference type="OMA" id="FCPKHSC"/>
<dbReference type="OrthoDB" id="5964929at2759"/>
<dbReference type="PhylomeDB" id="Q9CWH0"/>
<dbReference type="TreeFam" id="TF338129"/>
<dbReference type="BioGRID-ORCS" id="73703">
    <property type="hits" value="2 hits in 77 CRISPR screens"/>
</dbReference>
<dbReference type="ChiTaRS" id="Dppa2">
    <property type="organism name" value="mouse"/>
</dbReference>
<dbReference type="PRO" id="PR:Q9CWH0"/>
<dbReference type="Proteomes" id="UP000000589">
    <property type="component" value="Chromosome 16"/>
</dbReference>
<dbReference type="RNAct" id="Q9CWH0">
    <property type="molecule type" value="protein"/>
</dbReference>
<dbReference type="Bgee" id="ENSMUSG00000072419">
    <property type="expression patterns" value="Expressed in cleaving embryo and 23 other cell types or tissues"/>
</dbReference>
<dbReference type="ExpressionAtlas" id="Q9CWH0">
    <property type="expression patterns" value="baseline and differential"/>
</dbReference>
<dbReference type="GO" id="GO:0005654">
    <property type="term" value="C:nucleoplasm"/>
    <property type="evidence" value="ECO:0000304"/>
    <property type="project" value="Reactome"/>
</dbReference>
<dbReference type="GO" id="GO:0005634">
    <property type="term" value="C:nucleus"/>
    <property type="evidence" value="ECO:0000314"/>
    <property type="project" value="MGI"/>
</dbReference>
<dbReference type="GO" id="GO:0003682">
    <property type="term" value="F:chromatin binding"/>
    <property type="evidence" value="ECO:0000314"/>
    <property type="project" value="MGI"/>
</dbReference>
<dbReference type="GO" id="GO:0040029">
    <property type="term" value="P:epigenetic regulation of gene expression"/>
    <property type="evidence" value="ECO:0000315"/>
    <property type="project" value="MGI"/>
</dbReference>
<dbReference type="GO" id="GO:0060484">
    <property type="term" value="P:lung-associated mesenchyme development"/>
    <property type="evidence" value="ECO:0000315"/>
    <property type="project" value="MGI"/>
</dbReference>
<dbReference type="GO" id="GO:2000648">
    <property type="term" value="P:positive regulation of stem cell proliferation"/>
    <property type="evidence" value="ECO:0000315"/>
    <property type="project" value="MGI"/>
</dbReference>
<dbReference type="GO" id="GO:0019827">
    <property type="term" value="P:stem cell population maintenance"/>
    <property type="evidence" value="ECO:0000315"/>
    <property type="project" value="MGI"/>
</dbReference>
<dbReference type="InterPro" id="IPR039590">
    <property type="entry name" value="Dppa2/4"/>
</dbReference>
<dbReference type="InterPro" id="IPR025891">
    <property type="entry name" value="Dppa2/4_C_dom"/>
</dbReference>
<dbReference type="InterPro" id="IPR025892">
    <property type="entry name" value="Dppa2/4_central_dom"/>
</dbReference>
<dbReference type="PANTHER" id="PTHR16073">
    <property type="entry name" value="DCR DOMAIN-CONTAINING PROTEIN"/>
    <property type="match status" value="1"/>
</dbReference>
<dbReference type="PANTHER" id="PTHR16073:SF10">
    <property type="entry name" value="DEVELOPMENTAL PLURIPOTENCY-ASSOCIATED PROTEIN 2"/>
    <property type="match status" value="1"/>
</dbReference>
<dbReference type="Pfam" id="PF14047">
    <property type="entry name" value="DCR"/>
    <property type="match status" value="1"/>
</dbReference>
<dbReference type="Pfam" id="PF14049">
    <property type="entry name" value="Dppa2_A"/>
    <property type="match status" value="1"/>
</dbReference>
<proteinExistence type="evidence at protein level"/>
<comment type="function">
    <text evidence="3">Binds to target gene promoters, including NKX2-5 and SYCE1, but not GATA4, and may be involved in the maintenance of the active epigenetic status of these genes.</text>
</comment>
<comment type="subunit">
    <text evidence="3">Interacts with DPPA4.</text>
</comment>
<comment type="subcellular location">
    <subcellularLocation>
        <location evidence="3">Nucleus</location>
    </subcellularLocation>
</comment>
<comment type="tissue specificity">
    <text evidence="2">Not detected in adult tissues.</text>
</comment>
<comment type="developmental stage">
    <text evidence="2 3">Expressed in 4-cell embryo, morula and blastocyst. At 7.5 dpc, detected in the epiblast. At 10.0 dpc, expressed in the primordial germ cells. Expression decreases at 12.0 dpc in the embryonic gonads. At 14.5 dpc, expression is restricted to testis. 6 days after birth, still detected in primitive type A spermatogonia. Expressed in undifferentiated embryonic stem cells, but expression rapidly decreases upon differentiation.</text>
</comment>
<comment type="disruption phenotype">
    <text evidence="3">Mutant animals show survival rates similar to wild-type until 16.5 dpc. Then mortality increases and no animals survive beyond weaning age. At 18.5 dpc, the lungs of mutants mice show a thicker mesenchyme and smaller alveolar space than those of wild-type animals.</text>
</comment>
<organism>
    <name type="scientific">Mus musculus</name>
    <name type="common">Mouse</name>
    <dbReference type="NCBI Taxonomy" id="10090"/>
    <lineage>
        <taxon>Eukaryota</taxon>
        <taxon>Metazoa</taxon>
        <taxon>Chordata</taxon>
        <taxon>Craniata</taxon>
        <taxon>Vertebrata</taxon>
        <taxon>Euteleostomi</taxon>
        <taxon>Mammalia</taxon>
        <taxon>Eutheria</taxon>
        <taxon>Euarchontoglires</taxon>
        <taxon>Glires</taxon>
        <taxon>Rodentia</taxon>
        <taxon>Myomorpha</taxon>
        <taxon>Muroidea</taxon>
        <taxon>Muridae</taxon>
        <taxon>Murinae</taxon>
        <taxon>Mus</taxon>
        <taxon>Mus</taxon>
    </lineage>
</organism>
<accession>Q9CWH0</accession>
<feature type="chain" id="PRO_0000239264" description="Developmental pluripotency-associated protein 2">
    <location>
        <begin position="1"/>
        <end position="301"/>
    </location>
</feature>
<feature type="domain" description="SAP">
    <location>
        <begin position="85"/>
        <end position="119"/>
    </location>
</feature>
<feature type="region of interest" description="Disordered" evidence="1">
    <location>
        <begin position="31"/>
        <end position="85"/>
    </location>
</feature>
<feature type="compositionally biased region" description="Polar residues" evidence="1">
    <location>
        <begin position="39"/>
        <end position="52"/>
    </location>
</feature>
<feature type="compositionally biased region" description="Basic residues" evidence="1">
    <location>
        <begin position="60"/>
        <end position="70"/>
    </location>
</feature>
<keyword id="KW-0539">Nucleus</keyword>
<keyword id="KW-1185">Reference proteome</keyword>
<keyword id="KW-0804">Transcription</keyword>
<keyword id="KW-0805">Transcription regulation</keyword>
<name>DPPA2_MOUSE</name>
<evidence type="ECO:0000256" key="1">
    <source>
        <dbReference type="SAM" id="MobiDB-lite"/>
    </source>
</evidence>
<evidence type="ECO:0000269" key="2">
    <source>
    </source>
</evidence>
<evidence type="ECO:0000269" key="3">
    <source>
    </source>
</evidence>
<gene>
    <name type="primary">Dppa2</name>
    <name type="synonym">Phsecrg1</name>
</gene>